<protein>
    <recommendedName>
        <fullName evidence="1">DNA-binding protein HU</fullName>
    </recommendedName>
    <alternativeName>
        <fullName evidence="4">Histone-like HU protein</fullName>
    </alternativeName>
</protein>
<dbReference type="EMBL" id="AE002098">
    <property type="protein sequence ID" value="AAF41611.1"/>
    <property type="molecule type" value="Genomic_DNA"/>
</dbReference>
<dbReference type="PIR" id="G81106">
    <property type="entry name" value="G81106"/>
</dbReference>
<dbReference type="RefSeq" id="NP_274254.1">
    <property type="nucleotide sequence ID" value="NC_003112.2"/>
</dbReference>
<dbReference type="RefSeq" id="WP_002213508.1">
    <property type="nucleotide sequence ID" value="NC_003112.2"/>
</dbReference>
<dbReference type="SMR" id="P64389"/>
<dbReference type="FunCoup" id="P64389">
    <property type="interactions" value="347"/>
</dbReference>
<dbReference type="STRING" id="122586.NMB1230"/>
<dbReference type="PaxDb" id="122586-NMB1230"/>
<dbReference type="KEGG" id="nme:NMB1230"/>
<dbReference type="PATRIC" id="fig|122586.8.peg.1538"/>
<dbReference type="HOGENOM" id="CLU_105066_3_3_4"/>
<dbReference type="InParanoid" id="P64389"/>
<dbReference type="OrthoDB" id="9799835at2"/>
<dbReference type="Proteomes" id="UP000000425">
    <property type="component" value="Chromosome"/>
</dbReference>
<dbReference type="GO" id="GO:0005829">
    <property type="term" value="C:cytosol"/>
    <property type="evidence" value="ECO:0000318"/>
    <property type="project" value="GO_Central"/>
</dbReference>
<dbReference type="GO" id="GO:0003677">
    <property type="term" value="F:DNA binding"/>
    <property type="evidence" value="ECO:0000318"/>
    <property type="project" value="GO_Central"/>
</dbReference>
<dbReference type="GO" id="GO:0030527">
    <property type="term" value="F:structural constituent of chromatin"/>
    <property type="evidence" value="ECO:0007669"/>
    <property type="project" value="InterPro"/>
</dbReference>
<dbReference type="GO" id="GO:0030261">
    <property type="term" value="P:chromosome condensation"/>
    <property type="evidence" value="ECO:0007669"/>
    <property type="project" value="UniProtKB-KW"/>
</dbReference>
<dbReference type="CDD" id="cd13831">
    <property type="entry name" value="HU"/>
    <property type="match status" value="1"/>
</dbReference>
<dbReference type="FunFam" id="4.10.520.10:FF:000001">
    <property type="entry name" value="DNA-binding protein HU"/>
    <property type="match status" value="1"/>
</dbReference>
<dbReference type="Gene3D" id="4.10.520.10">
    <property type="entry name" value="IHF-like DNA-binding proteins"/>
    <property type="match status" value="1"/>
</dbReference>
<dbReference type="InterPro" id="IPR000119">
    <property type="entry name" value="Hist_DNA-bd"/>
</dbReference>
<dbReference type="InterPro" id="IPR020816">
    <property type="entry name" value="Histone-like_DNA-bd_CS"/>
</dbReference>
<dbReference type="InterPro" id="IPR010992">
    <property type="entry name" value="IHF-like_DNA-bd_dom_sf"/>
</dbReference>
<dbReference type="PANTHER" id="PTHR33175">
    <property type="entry name" value="DNA-BINDING PROTEIN HU"/>
    <property type="match status" value="1"/>
</dbReference>
<dbReference type="PANTHER" id="PTHR33175:SF3">
    <property type="entry name" value="DNA-BINDING PROTEIN HU-BETA"/>
    <property type="match status" value="1"/>
</dbReference>
<dbReference type="Pfam" id="PF00216">
    <property type="entry name" value="Bac_DNA_binding"/>
    <property type="match status" value="1"/>
</dbReference>
<dbReference type="PRINTS" id="PR01727">
    <property type="entry name" value="DNABINDINGHU"/>
</dbReference>
<dbReference type="SMART" id="SM00411">
    <property type="entry name" value="BHL"/>
    <property type="match status" value="1"/>
</dbReference>
<dbReference type="SUPFAM" id="SSF47729">
    <property type="entry name" value="IHF-like DNA-binding proteins"/>
    <property type="match status" value="1"/>
</dbReference>
<dbReference type="PROSITE" id="PS00045">
    <property type="entry name" value="HISTONE_LIKE"/>
    <property type="match status" value="1"/>
</dbReference>
<reference key="1">
    <citation type="journal article" date="2000" name="Science">
        <title>Complete genome sequence of Neisseria meningitidis serogroup B strain MC58.</title>
        <authorList>
            <person name="Tettelin H."/>
            <person name="Saunders N.J."/>
            <person name="Heidelberg J.F."/>
            <person name="Jeffries A.C."/>
            <person name="Nelson K.E."/>
            <person name="Eisen J.A."/>
            <person name="Ketchum K.A."/>
            <person name="Hood D.W."/>
            <person name="Peden J.F."/>
            <person name="Dodson R.J."/>
            <person name="Nelson W.C."/>
            <person name="Gwinn M.L."/>
            <person name="DeBoy R.T."/>
            <person name="Peterson J.D."/>
            <person name="Hickey E.K."/>
            <person name="Haft D.H."/>
            <person name="Salzberg S.L."/>
            <person name="White O."/>
            <person name="Fleischmann R.D."/>
            <person name="Dougherty B.A."/>
            <person name="Mason T.M."/>
            <person name="Ciecko A."/>
            <person name="Parksey D.S."/>
            <person name="Blair E."/>
            <person name="Cittone H."/>
            <person name="Clark E.B."/>
            <person name="Cotton M.D."/>
            <person name="Utterback T.R."/>
            <person name="Khouri H.M."/>
            <person name="Qin H."/>
            <person name="Vamathevan J.J."/>
            <person name="Gill J."/>
            <person name="Scarlato V."/>
            <person name="Masignani V."/>
            <person name="Pizza M."/>
            <person name="Grandi G."/>
            <person name="Sun L."/>
            <person name="Smith H.O."/>
            <person name="Fraser C.M."/>
            <person name="Moxon E.R."/>
            <person name="Rappuoli R."/>
            <person name="Venter J.C."/>
        </authorList>
    </citation>
    <scope>NUCLEOTIDE SEQUENCE [LARGE SCALE GENOMIC DNA]</scope>
    <source>
        <strain>ATCC BAA-335 / MC58</strain>
    </source>
</reference>
<reference key="2">
    <citation type="journal article" date="2013" name="Nucleic Acids Res.">
        <title>Neisseria conserved hypothetical protein DMP12 is a DNA mimic that binds to histone-like HU protein.</title>
        <authorList>
            <person name="Wang H.C."/>
            <person name="Wu M.L."/>
            <person name="Ko T.P."/>
            <person name="Wang A.H."/>
        </authorList>
    </citation>
    <scope>ACTIVITY REGULATION</scope>
    <scope>SUBUNIT</scope>
    <scope>INTERACTION WITH DMP12</scope>
    <source>
        <strain>ATCC BAA-335 / MC58</strain>
    </source>
</reference>
<reference key="3">
    <citation type="journal article" date="2017" name="PLoS ONE">
        <title>The monomeric form of Neisseria DNA mimic protein DMP19 prevents DNA from binding to the histone-like HU protein.</title>
        <authorList>
            <person name="Huang M.F."/>
            <person name="Lin S.J."/>
            <person name="Ko T.P."/>
            <person name="Liao Y.T."/>
            <person name="Hsu K.C."/>
            <person name="Wang H.C."/>
        </authorList>
    </citation>
    <scope>ACTIVITY REGULATION</scope>
    <scope>SUBUNIT</scope>
    <scope>INTERACTION WITH DMP19</scope>
    <source>
        <strain>ATCC BAA-335 / MC58</strain>
    </source>
</reference>
<sequence>MNKSELIEAIAQEADISKAAAQKALDATTNAVTTALKQGDTVTLVGFGTFYVGERAERQGRNPKTGEPLTIAAAKTPKFRAGKALKDAL</sequence>
<proteinExistence type="evidence at protein level"/>
<feature type="chain" id="PRO_0000104952" description="DNA-binding protein HU">
    <location>
        <begin position="1"/>
        <end position="89"/>
    </location>
</feature>
<organism>
    <name type="scientific">Neisseria meningitidis serogroup B (strain ATCC BAA-335 / MC58)</name>
    <dbReference type="NCBI Taxonomy" id="122586"/>
    <lineage>
        <taxon>Bacteria</taxon>
        <taxon>Pseudomonadati</taxon>
        <taxon>Pseudomonadota</taxon>
        <taxon>Betaproteobacteria</taxon>
        <taxon>Neisseriales</taxon>
        <taxon>Neisseriaceae</taxon>
        <taxon>Neisseria</taxon>
    </lineage>
</organism>
<comment type="function">
    <text evidence="1">Histone-like DNA-binding protein which is capable of wrapping DNA to stabilize it, and thus to prevent its denaturation under extreme environmental conditions.</text>
</comment>
<comment type="activity regulation">
    <text evidence="2 3">Activity is regulated by the DNA mimic protein DMP12 (PubMed:23531546). Activity is inhibited in the presence of the DNA mimic protein DMP19, which interacts with HU and prevents the binding of HU to DNA (PubMed:29220372).</text>
</comment>
<comment type="subunit">
    <text evidence="2 3">Homodimer (PubMed:23531546, PubMed:29220372). The dimer interacts with the DNA mimic protein DMP12 (PubMed:23531546). It also interacts with the monomeric form of the DNA mimic protein DMP19 with 1:1 stoichiometry (PubMed:29220372).</text>
</comment>
<comment type="similarity">
    <text evidence="5">Belongs to the bacterial histone-like protein family.</text>
</comment>
<keyword id="KW-0226">DNA condensation</keyword>
<keyword id="KW-0238">DNA-binding</keyword>
<keyword id="KW-1185">Reference proteome</keyword>
<name>DBH_NEIMB</name>
<evidence type="ECO:0000250" key="1">
    <source>
        <dbReference type="UniProtKB" id="P0ACF4"/>
    </source>
</evidence>
<evidence type="ECO:0000269" key="2">
    <source>
    </source>
</evidence>
<evidence type="ECO:0000269" key="3">
    <source>
    </source>
</evidence>
<evidence type="ECO:0000303" key="4">
    <source>
    </source>
</evidence>
<evidence type="ECO:0000305" key="5"/>
<evidence type="ECO:0000312" key="6">
    <source>
        <dbReference type="EMBL" id="AAF41611.1"/>
    </source>
</evidence>
<gene>
    <name evidence="6" type="primary">hupB</name>
    <name evidence="6" type="ordered locus">NMB1230</name>
</gene>
<accession>P64389</accession>
<accession>Q9JRI6</accession>